<sequence length="235" mass="27528">MDIKVKDFEGPLDLLLHLVSKYEVDVYQVPIVDVIEQYLAYIETLQAMRLELAGEYMLMASQLMLIKSRRLLPKLVDKEPDEEDLEQELLGKIEEYSRFKALSQELASQHDKRALLFSKPKQELIFEQAVLQKDKTVMDLFLAFSQLMAAKQEAFKYNHTVIERDDYRIEDMMELIEARLELEQELTLTDLLKHCDHLNEAITLFLASLELIKRQLVGIEQTSHFGQIVLRKEIQ</sequence>
<dbReference type="EMBL" id="CP001129">
    <property type="protein sequence ID" value="ACG62973.1"/>
    <property type="molecule type" value="Genomic_DNA"/>
</dbReference>
<dbReference type="RefSeq" id="WP_012516229.1">
    <property type="nucleotide sequence ID" value="NC_011134.1"/>
</dbReference>
<dbReference type="SMR" id="B4U4Q6"/>
<dbReference type="KEGG" id="sez:Sez_1642"/>
<dbReference type="HOGENOM" id="CLU_038686_3_3_9"/>
<dbReference type="Proteomes" id="UP000001873">
    <property type="component" value="Chromosome"/>
</dbReference>
<dbReference type="GO" id="GO:0005737">
    <property type="term" value="C:cytoplasm"/>
    <property type="evidence" value="ECO:0007669"/>
    <property type="project" value="UniProtKB-SubCell"/>
</dbReference>
<dbReference type="GO" id="GO:0051301">
    <property type="term" value="P:cell division"/>
    <property type="evidence" value="ECO:0007669"/>
    <property type="project" value="UniProtKB-KW"/>
</dbReference>
<dbReference type="GO" id="GO:0007059">
    <property type="term" value="P:chromosome segregation"/>
    <property type="evidence" value="ECO:0007669"/>
    <property type="project" value="UniProtKB-UniRule"/>
</dbReference>
<dbReference type="GO" id="GO:0006260">
    <property type="term" value="P:DNA replication"/>
    <property type="evidence" value="ECO:0007669"/>
    <property type="project" value="UniProtKB-UniRule"/>
</dbReference>
<dbReference type="Gene3D" id="6.10.250.2410">
    <property type="match status" value="1"/>
</dbReference>
<dbReference type="Gene3D" id="1.10.10.580">
    <property type="entry name" value="Structural maintenance of chromosome 1. Chain E"/>
    <property type="match status" value="1"/>
</dbReference>
<dbReference type="HAMAP" id="MF_01805">
    <property type="entry name" value="ScpA"/>
    <property type="match status" value="1"/>
</dbReference>
<dbReference type="InterPro" id="IPR003768">
    <property type="entry name" value="ScpA"/>
</dbReference>
<dbReference type="InterPro" id="IPR023093">
    <property type="entry name" value="ScpA-like_C"/>
</dbReference>
<dbReference type="NCBIfam" id="NF000993">
    <property type="entry name" value="PRK00104.1-2"/>
    <property type="match status" value="1"/>
</dbReference>
<dbReference type="PANTHER" id="PTHR33969">
    <property type="entry name" value="SEGREGATION AND CONDENSATION PROTEIN A"/>
    <property type="match status" value="1"/>
</dbReference>
<dbReference type="PANTHER" id="PTHR33969:SF2">
    <property type="entry name" value="SEGREGATION AND CONDENSATION PROTEIN A"/>
    <property type="match status" value="1"/>
</dbReference>
<dbReference type="Pfam" id="PF02616">
    <property type="entry name" value="SMC_ScpA"/>
    <property type="match status" value="1"/>
</dbReference>
<proteinExistence type="inferred from homology"/>
<feature type="chain" id="PRO_1000187568" description="Segregation and condensation protein A">
    <location>
        <begin position="1"/>
        <end position="235"/>
    </location>
</feature>
<evidence type="ECO:0000255" key="1">
    <source>
        <dbReference type="HAMAP-Rule" id="MF_01805"/>
    </source>
</evidence>
<accession>B4U4Q6</accession>
<gene>
    <name evidence="1" type="primary">scpA</name>
    <name type="ordered locus">Sez_1642</name>
</gene>
<reference key="1">
    <citation type="journal article" date="2008" name="PLoS ONE">
        <title>Genome sequence of a lancefield group C Streptococcus zooepidemicus strain causing epidemic nephritis: new information about an old disease.</title>
        <authorList>
            <person name="Beres S.B."/>
            <person name="Sesso R."/>
            <person name="Pinto S.W.L."/>
            <person name="Hoe N.P."/>
            <person name="Porcella S.F."/>
            <person name="Deleo F.R."/>
            <person name="Musser J.M."/>
        </authorList>
    </citation>
    <scope>NUCLEOTIDE SEQUENCE [LARGE SCALE GENOMIC DNA]</scope>
    <source>
        <strain>MGCS10565</strain>
    </source>
</reference>
<name>SCPA_STREM</name>
<comment type="function">
    <text evidence="1">Participates in chromosomal partition during cell division. May act via the formation of a condensin-like complex containing Smc and ScpB that pull DNA away from mid-cell into both cell halves.</text>
</comment>
<comment type="subunit">
    <text evidence="1">Component of a cohesin-like complex composed of ScpA, ScpB and the Smc homodimer, in which ScpA and ScpB bind to the head domain of Smc. The presence of the three proteins is required for the association of the complex with DNA.</text>
</comment>
<comment type="subcellular location">
    <subcellularLocation>
        <location evidence="1">Cytoplasm</location>
    </subcellularLocation>
    <text evidence="1">Associated with two foci at the outer edges of the nucleoid region in young cells, and at four foci within both cell halves in older cells.</text>
</comment>
<comment type="similarity">
    <text evidence="1">Belongs to the ScpA family.</text>
</comment>
<protein>
    <recommendedName>
        <fullName evidence="1">Segregation and condensation protein A</fullName>
    </recommendedName>
</protein>
<keyword id="KW-0131">Cell cycle</keyword>
<keyword id="KW-0132">Cell division</keyword>
<keyword id="KW-0159">Chromosome partition</keyword>
<keyword id="KW-0963">Cytoplasm</keyword>
<organism>
    <name type="scientific">Streptococcus equi subsp. zooepidemicus (strain MGCS10565)</name>
    <dbReference type="NCBI Taxonomy" id="552526"/>
    <lineage>
        <taxon>Bacteria</taxon>
        <taxon>Bacillati</taxon>
        <taxon>Bacillota</taxon>
        <taxon>Bacilli</taxon>
        <taxon>Lactobacillales</taxon>
        <taxon>Streptococcaceae</taxon>
        <taxon>Streptococcus</taxon>
    </lineage>
</organism>